<accession>Q2YUJ2</accession>
<gene>
    <name evidence="1" type="primary">upp</name>
    <name type="ordered locus">SAB1996c</name>
</gene>
<comment type="function">
    <text evidence="1">Catalyzes the conversion of uracil and 5-phospho-alpha-D-ribose 1-diphosphate (PRPP) to UMP and diphosphate.</text>
</comment>
<comment type="catalytic activity">
    <reaction evidence="1">
        <text>UMP + diphosphate = 5-phospho-alpha-D-ribose 1-diphosphate + uracil</text>
        <dbReference type="Rhea" id="RHEA:13017"/>
        <dbReference type="ChEBI" id="CHEBI:17568"/>
        <dbReference type="ChEBI" id="CHEBI:33019"/>
        <dbReference type="ChEBI" id="CHEBI:57865"/>
        <dbReference type="ChEBI" id="CHEBI:58017"/>
        <dbReference type="EC" id="2.4.2.9"/>
    </reaction>
</comment>
<comment type="cofactor">
    <cofactor evidence="1">
        <name>Mg(2+)</name>
        <dbReference type="ChEBI" id="CHEBI:18420"/>
    </cofactor>
    <text evidence="1">Binds 1 Mg(2+) ion per subunit. The magnesium is bound as Mg-PRPP.</text>
</comment>
<comment type="activity regulation">
    <text evidence="1">Allosterically activated by GTP.</text>
</comment>
<comment type="pathway">
    <text evidence="1">Pyrimidine metabolism; UMP biosynthesis via salvage pathway; UMP from uracil: step 1/1.</text>
</comment>
<comment type="similarity">
    <text evidence="1">Belongs to the UPRTase family.</text>
</comment>
<proteinExistence type="inferred from homology"/>
<feature type="chain" id="PRO_1000053793" description="Uracil phosphoribosyltransferase">
    <location>
        <begin position="1"/>
        <end position="209"/>
    </location>
</feature>
<feature type="binding site" evidence="1">
    <location>
        <position position="79"/>
    </location>
    <ligand>
        <name>5-phospho-alpha-D-ribose 1-diphosphate</name>
        <dbReference type="ChEBI" id="CHEBI:58017"/>
    </ligand>
</feature>
<feature type="binding site" evidence="1">
    <location>
        <position position="104"/>
    </location>
    <ligand>
        <name>5-phospho-alpha-D-ribose 1-diphosphate</name>
        <dbReference type="ChEBI" id="CHEBI:58017"/>
    </ligand>
</feature>
<feature type="binding site" evidence="1">
    <location>
        <begin position="131"/>
        <end position="139"/>
    </location>
    <ligand>
        <name>5-phospho-alpha-D-ribose 1-diphosphate</name>
        <dbReference type="ChEBI" id="CHEBI:58017"/>
    </ligand>
</feature>
<feature type="binding site" evidence="1">
    <location>
        <position position="194"/>
    </location>
    <ligand>
        <name>uracil</name>
        <dbReference type="ChEBI" id="CHEBI:17568"/>
    </ligand>
</feature>
<feature type="binding site" evidence="1">
    <location>
        <begin position="199"/>
        <end position="201"/>
    </location>
    <ligand>
        <name>uracil</name>
        <dbReference type="ChEBI" id="CHEBI:17568"/>
    </ligand>
</feature>
<feature type="binding site" evidence="1">
    <location>
        <position position="200"/>
    </location>
    <ligand>
        <name>5-phospho-alpha-D-ribose 1-diphosphate</name>
        <dbReference type="ChEBI" id="CHEBI:58017"/>
    </ligand>
</feature>
<reference key="1">
    <citation type="journal article" date="2007" name="PLoS ONE">
        <title>Molecular correlates of host specialization in Staphylococcus aureus.</title>
        <authorList>
            <person name="Herron-Olson L."/>
            <person name="Fitzgerald J.R."/>
            <person name="Musser J.M."/>
            <person name="Kapur V."/>
        </authorList>
    </citation>
    <scope>NUCLEOTIDE SEQUENCE [LARGE SCALE GENOMIC DNA]</scope>
    <source>
        <strain>bovine RF122 / ET3-1</strain>
    </source>
</reference>
<keyword id="KW-0021">Allosteric enzyme</keyword>
<keyword id="KW-0328">Glycosyltransferase</keyword>
<keyword id="KW-0342">GTP-binding</keyword>
<keyword id="KW-0460">Magnesium</keyword>
<keyword id="KW-0547">Nucleotide-binding</keyword>
<keyword id="KW-0808">Transferase</keyword>
<name>UPP_STAAB</name>
<protein>
    <recommendedName>
        <fullName evidence="1">Uracil phosphoribosyltransferase</fullName>
        <ecNumber evidence="1">2.4.2.9</ecNumber>
    </recommendedName>
    <alternativeName>
        <fullName evidence="1">UMP pyrophosphorylase</fullName>
    </alternativeName>
    <alternativeName>
        <fullName evidence="1">UPRTase</fullName>
    </alternativeName>
</protein>
<dbReference type="EC" id="2.4.2.9" evidence="1"/>
<dbReference type="EMBL" id="AJ938182">
    <property type="protein sequence ID" value="CAI81685.1"/>
    <property type="molecule type" value="Genomic_DNA"/>
</dbReference>
<dbReference type="RefSeq" id="WP_000048712.1">
    <property type="nucleotide sequence ID" value="NC_007622.1"/>
</dbReference>
<dbReference type="SMR" id="Q2YUJ2"/>
<dbReference type="KEGG" id="sab:SAB1996c"/>
<dbReference type="HOGENOM" id="CLU_067096_2_2_9"/>
<dbReference type="UniPathway" id="UPA00574">
    <property type="reaction ID" value="UER00636"/>
</dbReference>
<dbReference type="GO" id="GO:0005525">
    <property type="term" value="F:GTP binding"/>
    <property type="evidence" value="ECO:0007669"/>
    <property type="project" value="UniProtKB-KW"/>
</dbReference>
<dbReference type="GO" id="GO:0000287">
    <property type="term" value="F:magnesium ion binding"/>
    <property type="evidence" value="ECO:0007669"/>
    <property type="project" value="UniProtKB-UniRule"/>
</dbReference>
<dbReference type="GO" id="GO:0004845">
    <property type="term" value="F:uracil phosphoribosyltransferase activity"/>
    <property type="evidence" value="ECO:0007669"/>
    <property type="project" value="UniProtKB-UniRule"/>
</dbReference>
<dbReference type="GO" id="GO:0044206">
    <property type="term" value="P:UMP salvage"/>
    <property type="evidence" value="ECO:0007669"/>
    <property type="project" value="UniProtKB-UniRule"/>
</dbReference>
<dbReference type="GO" id="GO:0006223">
    <property type="term" value="P:uracil salvage"/>
    <property type="evidence" value="ECO:0007669"/>
    <property type="project" value="InterPro"/>
</dbReference>
<dbReference type="CDD" id="cd06223">
    <property type="entry name" value="PRTases_typeI"/>
    <property type="match status" value="1"/>
</dbReference>
<dbReference type="FunFam" id="3.40.50.2020:FF:000003">
    <property type="entry name" value="Uracil phosphoribosyltransferase"/>
    <property type="match status" value="1"/>
</dbReference>
<dbReference type="Gene3D" id="3.40.50.2020">
    <property type="match status" value="1"/>
</dbReference>
<dbReference type="HAMAP" id="MF_01218_B">
    <property type="entry name" value="Upp_B"/>
    <property type="match status" value="1"/>
</dbReference>
<dbReference type="InterPro" id="IPR000836">
    <property type="entry name" value="PRibTrfase_dom"/>
</dbReference>
<dbReference type="InterPro" id="IPR029057">
    <property type="entry name" value="PRTase-like"/>
</dbReference>
<dbReference type="InterPro" id="IPR034332">
    <property type="entry name" value="Upp_B"/>
</dbReference>
<dbReference type="InterPro" id="IPR050054">
    <property type="entry name" value="UPRTase/APRTase"/>
</dbReference>
<dbReference type="InterPro" id="IPR005765">
    <property type="entry name" value="Ura_phspho_trans"/>
</dbReference>
<dbReference type="NCBIfam" id="NF001097">
    <property type="entry name" value="PRK00129.1"/>
    <property type="match status" value="1"/>
</dbReference>
<dbReference type="NCBIfam" id="TIGR01091">
    <property type="entry name" value="upp"/>
    <property type="match status" value="1"/>
</dbReference>
<dbReference type="PANTHER" id="PTHR32315">
    <property type="entry name" value="ADENINE PHOSPHORIBOSYLTRANSFERASE"/>
    <property type="match status" value="1"/>
</dbReference>
<dbReference type="PANTHER" id="PTHR32315:SF4">
    <property type="entry name" value="URACIL PHOSPHORIBOSYLTRANSFERASE, CHLOROPLASTIC"/>
    <property type="match status" value="1"/>
</dbReference>
<dbReference type="Pfam" id="PF14681">
    <property type="entry name" value="UPRTase"/>
    <property type="match status" value="1"/>
</dbReference>
<dbReference type="SUPFAM" id="SSF53271">
    <property type="entry name" value="PRTase-like"/>
    <property type="match status" value="1"/>
</dbReference>
<organism>
    <name type="scientific">Staphylococcus aureus (strain bovine RF122 / ET3-1)</name>
    <dbReference type="NCBI Taxonomy" id="273036"/>
    <lineage>
        <taxon>Bacteria</taxon>
        <taxon>Bacillati</taxon>
        <taxon>Bacillota</taxon>
        <taxon>Bacilli</taxon>
        <taxon>Bacillales</taxon>
        <taxon>Staphylococcaceae</taxon>
        <taxon>Staphylococcus</taxon>
    </lineage>
</organism>
<sequence>MSKVHVFDHPLIQHKLSYIRDVNTGTKEFRELVDEVGMLMAYEVTRDLELQDVDIETPVTKMTAKRLAGKKLAIVPILRAGLGMTDGILSLVPAARVGHIGLYRDPETLKAVEYFAKLPQDITERQIIVVDPMLATGASAIEAITSLKKRGAKNIRFMCLIAAPEGVEKMHEAHPDVDIYIAALDEKLNDKAYITPGLGDAGDRLFGTK</sequence>
<evidence type="ECO:0000255" key="1">
    <source>
        <dbReference type="HAMAP-Rule" id="MF_01218"/>
    </source>
</evidence>